<dbReference type="EC" id="6.5.1.2" evidence="1"/>
<dbReference type="EMBL" id="AM902716">
    <property type="protein sequence ID" value="CAP42045.1"/>
    <property type="molecule type" value="Genomic_DNA"/>
</dbReference>
<dbReference type="SMR" id="A9II69"/>
<dbReference type="STRING" id="94624.Bpet1706"/>
<dbReference type="KEGG" id="bpt:Bpet1706"/>
<dbReference type="eggNOG" id="COG0272">
    <property type="taxonomic scope" value="Bacteria"/>
</dbReference>
<dbReference type="Proteomes" id="UP000001225">
    <property type="component" value="Chromosome"/>
</dbReference>
<dbReference type="GO" id="GO:0005829">
    <property type="term" value="C:cytosol"/>
    <property type="evidence" value="ECO:0007669"/>
    <property type="project" value="TreeGrafter"/>
</dbReference>
<dbReference type="GO" id="GO:0003677">
    <property type="term" value="F:DNA binding"/>
    <property type="evidence" value="ECO:0007669"/>
    <property type="project" value="InterPro"/>
</dbReference>
<dbReference type="GO" id="GO:0003911">
    <property type="term" value="F:DNA ligase (NAD+) activity"/>
    <property type="evidence" value="ECO:0007669"/>
    <property type="project" value="UniProtKB-UniRule"/>
</dbReference>
<dbReference type="GO" id="GO:0046872">
    <property type="term" value="F:metal ion binding"/>
    <property type="evidence" value="ECO:0007669"/>
    <property type="project" value="UniProtKB-KW"/>
</dbReference>
<dbReference type="GO" id="GO:0006281">
    <property type="term" value="P:DNA repair"/>
    <property type="evidence" value="ECO:0007669"/>
    <property type="project" value="UniProtKB-KW"/>
</dbReference>
<dbReference type="GO" id="GO:0006260">
    <property type="term" value="P:DNA replication"/>
    <property type="evidence" value="ECO:0007669"/>
    <property type="project" value="UniProtKB-KW"/>
</dbReference>
<dbReference type="CDD" id="cd17748">
    <property type="entry name" value="BRCT_DNA_ligase_like"/>
    <property type="match status" value="1"/>
</dbReference>
<dbReference type="CDD" id="cd00114">
    <property type="entry name" value="LIGANc"/>
    <property type="match status" value="1"/>
</dbReference>
<dbReference type="FunFam" id="1.10.150.20:FF:000006">
    <property type="entry name" value="DNA ligase"/>
    <property type="match status" value="1"/>
</dbReference>
<dbReference type="FunFam" id="1.10.150.20:FF:000007">
    <property type="entry name" value="DNA ligase"/>
    <property type="match status" value="1"/>
</dbReference>
<dbReference type="FunFam" id="1.10.287.610:FF:000002">
    <property type="entry name" value="DNA ligase"/>
    <property type="match status" value="1"/>
</dbReference>
<dbReference type="FunFam" id="2.40.50.140:FF:000012">
    <property type="entry name" value="DNA ligase"/>
    <property type="match status" value="1"/>
</dbReference>
<dbReference type="Gene3D" id="6.20.10.30">
    <property type="match status" value="1"/>
</dbReference>
<dbReference type="Gene3D" id="1.10.150.20">
    <property type="entry name" value="5' to 3' exonuclease, C-terminal subdomain"/>
    <property type="match status" value="2"/>
</dbReference>
<dbReference type="Gene3D" id="3.40.50.10190">
    <property type="entry name" value="BRCT domain"/>
    <property type="match status" value="1"/>
</dbReference>
<dbReference type="Gene3D" id="3.30.470.30">
    <property type="entry name" value="DNA ligase/mRNA capping enzyme"/>
    <property type="match status" value="1"/>
</dbReference>
<dbReference type="Gene3D" id="1.10.287.610">
    <property type="entry name" value="Helix hairpin bin"/>
    <property type="match status" value="1"/>
</dbReference>
<dbReference type="Gene3D" id="2.40.50.140">
    <property type="entry name" value="Nucleic acid-binding proteins"/>
    <property type="match status" value="1"/>
</dbReference>
<dbReference type="HAMAP" id="MF_01588">
    <property type="entry name" value="DNA_ligase_A"/>
    <property type="match status" value="1"/>
</dbReference>
<dbReference type="InterPro" id="IPR001357">
    <property type="entry name" value="BRCT_dom"/>
</dbReference>
<dbReference type="InterPro" id="IPR036420">
    <property type="entry name" value="BRCT_dom_sf"/>
</dbReference>
<dbReference type="InterPro" id="IPR041663">
    <property type="entry name" value="DisA/LigA_HHH"/>
</dbReference>
<dbReference type="InterPro" id="IPR001679">
    <property type="entry name" value="DNA_ligase"/>
</dbReference>
<dbReference type="InterPro" id="IPR018239">
    <property type="entry name" value="DNA_ligase_AS"/>
</dbReference>
<dbReference type="InterPro" id="IPR033136">
    <property type="entry name" value="DNA_ligase_CS"/>
</dbReference>
<dbReference type="InterPro" id="IPR013839">
    <property type="entry name" value="DNAligase_adenylation"/>
</dbReference>
<dbReference type="InterPro" id="IPR013840">
    <property type="entry name" value="DNAligase_N"/>
</dbReference>
<dbReference type="InterPro" id="IPR003583">
    <property type="entry name" value="Hlx-hairpin-Hlx_DNA-bd_motif"/>
</dbReference>
<dbReference type="InterPro" id="IPR012340">
    <property type="entry name" value="NA-bd_OB-fold"/>
</dbReference>
<dbReference type="InterPro" id="IPR004150">
    <property type="entry name" value="NAD_DNA_ligase_OB"/>
</dbReference>
<dbReference type="InterPro" id="IPR010994">
    <property type="entry name" value="RuvA_2-like"/>
</dbReference>
<dbReference type="InterPro" id="IPR004149">
    <property type="entry name" value="Znf_DNAligase_C4"/>
</dbReference>
<dbReference type="NCBIfam" id="TIGR00575">
    <property type="entry name" value="dnlj"/>
    <property type="match status" value="1"/>
</dbReference>
<dbReference type="NCBIfam" id="NF005932">
    <property type="entry name" value="PRK07956.1"/>
    <property type="match status" value="1"/>
</dbReference>
<dbReference type="PANTHER" id="PTHR23389">
    <property type="entry name" value="CHROMOSOME TRANSMISSION FIDELITY FACTOR 18"/>
    <property type="match status" value="1"/>
</dbReference>
<dbReference type="PANTHER" id="PTHR23389:SF9">
    <property type="entry name" value="DNA LIGASE"/>
    <property type="match status" value="1"/>
</dbReference>
<dbReference type="Pfam" id="PF00533">
    <property type="entry name" value="BRCT"/>
    <property type="match status" value="1"/>
</dbReference>
<dbReference type="Pfam" id="PF01653">
    <property type="entry name" value="DNA_ligase_aden"/>
    <property type="match status" value="2"/>
</dbReference>
<dbReference type="Pfam" id="PF03120">
    <property type="entry name" value="DNA_ligase_OB"/>
    <property type="match status" value="1"/>
</dbReference>
<dbReference type="Pfam" id="PF03119">
    <property type="entry name" value="DNA_ligase_ZBD"/>
    <property type="match status" value="1"/>
</dbReference>
<dbReference type="Pfam" id="PF12826">
    <property type="entry name" value="HHH_2"/>
    <property type="match status" value="1"/>
</dbReference>
<dbReference type="Pfam" id="PF14520">
    <property type="entry name" value="HHH_5"/>
    <property type="match status" value="1"/>
</dbReference>
<dbReference type="Pfam" id="PF22745">
    <property type="entry name" value="Nlig-Ia"/>
    <property type="match status" value="1"/>
</dbReference>
<dbReference type="PIRSF" id="PIRSF001604">
    <property type="entry name" value="LigA"/>
    <property type="match status" value="1"/>
</dbReference>
<dbReference type="SMART" id="SM00292">
    <property type="entry name" value="BRCT"/>
    <property type="match status" value="1"/>
</dbReference>
<dbReference type="SMART" id="SM00278">
    <property type="entry name" value="HhH1"/>
    <property type="match status" value="4"/>
</dbReference>
<dbReference type="SMART" id="SM00532">
    <property type="entry name" value="LIGANc"/>
    <property type="match status" value="1"/>
</dbReference>
<dbReference type="SUPFAM" id="SSF52113">
    <property type="entry name" value="BRCT domain"/>
    <property type="match status" value="1"/>
</dbReference>
<dbReference type="SUPFAM" id="SSF56091">
    <property type="entry name" value="DNA ligase/mRNA capping enzyme, catalytic domain"/>
    <property type="match status" value="1"/>
</dbReference>
<dbReference type="SUPFAM" id="SSF50249">
    <property type="entry name" value="Nucleic acid-binding proteins"/>
    <property type="match status" value="1"/>
</dbReference>
<dbReference type="SUPFAM" id="SSF47781">
    <property type="entry name" value="RuvA domain 2-like"/>
    <property type="match status" value="1"/>
</dbReference>
<dbReference type="PROSITE" id="PS50172">
    <property type="entry name" value="BRCT"/>
    <property type="match status" value="1"/>
</dbReference>
<dbReference type="PROSITE" id="PS01055">
    <property type="entry name" value="DNA_LIGASE_N1"/>
    <property type="match status" value="1"/>
</dbReference>
<dbReference type="PROSITE" id="PS01056">
    <property type="entry name" value="DNA_LIGASE_N2"/>
    <property type="match status" value="1"/>
</dbReference>
<reference key="1">
    <citation type="journal article" date="2008" name="BMC Genomics">
        <title>The missing link: Bordetella petrii is endowed with both the metabolic versatility of environmental bacteria and virulence traits of pathogenic Bordetellae.</title>
        <authorList>
            <person name="Gross R."/>
            <person name="Guzman C.A."/>
            <person name="Sebaihia M."/>
            <person name="Martin dos Santos V.A.P."/>
            <person name="Pieper D.H."/>
            <person name="Koebnik R."/>
            <person name="Lechner M."/>
            <person name="Bartels D."/>
            <person name="Buhrmester J."/>
            <person name="Choudhuri J.V."/>
            <person name="Ebensen T."/>
            <person name="Gaigalat L."/>
            <person name="Herrmann S."/>
            <person name="Khachane A.N."/>
            <person name="Larisch C."/>
            <person name="Link S."/>
            <person name="Linke B."/>
            <person name="Meyer F."/>
            <person name="Mormann S."/>
            <person name="Nakunst D."/>
            <person name="Rueckert C."/>
            <person name="Schneiker-Bekel S."/>
            <person name="Schulze K."/>
            <person name="Voerholter F.-J."/>
            <person name="Yevsa T."/>
            <person name="Engle J.T."/>
            <person name="Goldman W.E."/>
            <person name="Puehler A."/>
            <person name="Goebel U.B."/>
            <person name="Goesmann A."/>
            <person name="Bloecker H."/>
            <person name="Kaiser O."/>
            <person name="Martinez-Arias R."/>
        </authorList>
    </citation>
    <scope>NUCLEOTIDE SEQUENCE [LARGE SCALE GENOMIC DNA]</scope>
    <source>
        <strain>ATCC BAA-461 / DSM 12804 / CCUG 43448</strain>
    </source>
</reference>
<comment type="function">
    <text evidence="1">DNA ligase that catalyzes the formation of phosphodiester linkages between 5'-phosphoryl and 3'-hydroxyl groups in double-stranded DNA using NAD as a coenzyme and as the energy source for the reaction. It is essential for DNA replication and repair of damaged DNA.</text>
</comment>
<comment type="catalytic activity">
    <reaction evidence="1">
        <text>NAD(+) + (deoxyribonucleotide)n-3'-hydroxyl + 5'-phospho-(deoxyribonucleotide)m = (deoxyribonucleotide)n+m + AMP + beta-nicotinamide D-nucleotide.</text>
        <dbReference type="EC" id="6.5.1.2"/>
    </reaction>
</comment>
<comment type="cofactor">
    <cofactor evidence="1">
        <name>Mg(2+)</name>
        <dbReference type="ChEBI" id="CHEBI:18420"/>
    </cofactor>
    <cofactor evidence="1">
        <name>Mn(2+)</name>
        <dbReference type="ChEBI" id="CHEBI:29035"/>
    </cofactor>
</comment>
<comment type="similarity">
    <text evidence="1">Belongs to the NAD-dependent DNA ligase family. LigA subfamily.</text>
</comment>
<name>DNLJ_BORPD</name>
<accession>A9II69</accession>
<evidence type="ECO:0000255" key="1">
    <source>
        <dbReference type="HAMAP-Rule" id="MF_01588"/>
    </source>
</evidence>
<protein>
    <recommendedName>
        <fullName evidence="1">DNA ligase</fullName>
        <ecNumber evidence="1">6.5.1.2</ecNumber>
    </recommendedName>
    <alternativeName>
        <fullName evidence="1">Polydeoxyribonucleotide synthase [NAD(+)]</fullName>
    </alternativeName>
</protein>
<feature type="chain" id="PRO_0000380313" description="DNA ligase">
    <location>
        <begin position="1"/>
        <end position="697"/>
    </location>
</feature>
<feature type="domain" description="BRCT" evidence="1">
    <location>
        <begin position="619"/>
        <end position="697"/>
    </location>
</feature>
<feature type="active site" description="N6-AMP-lysine intermediate" evidence="1">
    <location>
        <position position="125"/>
    </location>
</feature>
<feature type="binding site" evidence="1">
    <location>
        <begin position="36"/>
        <end position="40"/>
    </location>
    <ligand>
        <name>NAD(+)</name>
        <dbReference type="ChEBI" id="CHEBI:57540"/>
    </ligand>
</feature>
<feature type="binding site" evidence="1">
    <location>
        <begin position="85"/>
        <end position="86"/>
    </location>
    <ligand>
        <name>NAD(+)</name>
        <dbReference type="ChEBI" id="CHEBI:57540"/>
    </ligand>
</feature>
<feature type="binding site" evidence="1">
    <location>
        <position position="123"/>
    </location>
    <ligand>
        <name>NAD(+)</name>
        <dbReference type="ChEBI" id="CHEBI:57540"/>
    </ligand>
</feature>
<feature type="binding site" evidence="1">
    <location>
        <position position="146"/>
    </location>
    <ligand>
        <name>NAD(+)</name>
        <dbReference type="ChEBI" id="CHEBI:57540"/>
    </ligand>
</feature>
<feature type="binding site" evidence="1">
    <location>
        <position position="182"/>
    </location>
    <ligand>
        <name>NAD(+)</name>
        <dbReference type="ChEBI" id="CHEBI:57540"/>
    </ligand>
</feature>
<feature type="binding site" evidence="1">
    <location>
        <position position="320"/>
    </location>
    <ligand>
        <name>NAD(+)</name>
        <dbReference type="ChEBI" id="CHEBI:57540"/>
    </ligand>
</feature>
<feature type="binding site" evidence="1">
    <location>
        <position position="344"/>
    </location>
    <ligand>
        <name>NAD(+)</name>
        <dbReference type="ChEBI" id="CHEBI:57540"/>
    </ligand>
</feature>
<feature type="binding site" evidence="1">
    <location>
        <position position="438"/>
    </location>
    <ligand>
        <name>Zn(2+)</name>
        <dbReference type="ChEBI" id="CHEBI:29105"/>
    </ligand>
</feature>
<feature type="binding site" evidence="1">
    <location>
        <position position="441"/>
    </location>
    <ligand>
        <name>Zn(2+)</name>
        <dbReference type="ChEBI" id="CHEBI:29105"/>
    </ligand>
</feature>
<feature type="binding site" evidence="1">
    <location>
        <position position="456"/>
    </location>
    <ligand>
        <name>Zn(2+)</name>
        <dbReference type="ChEBI" id="CHEBI:29105"/>
    </ligand>
</feature>
<feature type="binding site" evidence="1">
    <location>
        <position position="462"/>
    </location>
    <ligand>
        <name>Zn(2+)</name>
        <dbReference type="ChEBI" id="CHEBI:29105"/>
    </ligand>
</feature>
<gene>
    <name evidence="1" type="primary">ligA</name>
    <name type="ordered locus">Bpet1706</name>
</gene>
<proteinExistence type="inferred from homology"/>
<keyword id="KW-0227">DNA damage</keyword>
<keyword id="KW-0234">DNA repair</keyword>
<keyword id="KW-0235">DNA replication</keyword>
<keyword id="KW-0436">Ligase</keyword>
<keyword id="KW-0460">Magnesium</keyword>
<keyword id="KW-0464">Manganese</keyword>
<keyword id="KW-0479">Metal-binding</keyword>
<keyword id="KW-0520">NAD</keyword>
<keyword id="KW-0862">Zinc</keyword>
<organism>
    <name type="scientific">Bordetella petrii (strain ATCC BAA-461 / DSM 12804 / CCUG 43448)</name>
    <dbReference type="NCBI Taxonomy" id="340100"/>
    <lineage>
        <taxon>Bacteria</taxon>
        <taxon>Pseudomonadati</taxon>
        <taxon>Pseudomonadota</taxon>
        <taxon>Betaproteobacteria</taxon>
        <taxon>Burkholderiales</taxon>
        <taxon>Alcaligenaceae</taxon>
        <taxon>Bordetella</taxon>
    </lineage>
</organism>
<sequence length="697" mass="75215">MAGQAGQAAQRVAALRNEIEQHNVRYYVHDDPSVSDAEYDALMRELIQLETDHPELVTPESPTQRVGAAPLAAFGSVRHAVPMLSLGNAFDPDEVQAFDRRVGDTLRGAGLLRVDQQPEYFCELKLDGLAISLRYEDGVLVQAATRGDGQTGEDVTANVRTIRAVPLRLKGAAPRVLEVRGEVLMNRAEFDRLNRSQAARDEKVFVNPRNAAAGSLRQLDPRITAQRPLRFFAYSWGEVHGLPGRQTALFDEPAPGAREESTLPRDTHGAMLDWLAELGLPVNTRHNRRAVGAEGLLAFYEQVGRERPGLPYDIDGVVYKVNSLPAQKVLGFVARAPRFALAHKFPAEEATTRLLDIEVQVGRTGAITPVARLQPVFVGGVTVTNATLHNEDEVRRKDVRIGDTVTVRRAGDVIPEVVGPVPGKRPADAREFVMPVSCPVCGSAIERPEDEAIARCTGGLFCAAQRKQTLLHAAGRKALDIDGLGEKLIDQLVDSGRVKSLADLYSLNAFELAALERMGKKSADNLVAAIDRARTPSLGRLLFALGIRHVGETTARDVARHFGSIETIMDADEEALAGAPDVGPVVAGSIRRFFAEPHNREIIDLLKAQGVHPVPEAGPQGNTLAGKTFVLTGTMPNWTRDEATRHILAAGGKVSGSVSKKTAYVVAGEEAGSKLAKAQELGVTVLDEDGLKALLGV</sequence>